<feature type="chain" id="PRO_0000130984" description="Small ribosomal subunit protein uS14c">
    <location>
        <begin position="1"/>
        <end position="100"/>
    </location>
</feature>
<keyword id="KW-0150">Chloroplast</keyword>
<keyword id="KW-0934">Plastid</keyword>
<keyword id="KW-0687">Ribonucleoprotein</keyword>
<keyword id="KW-0689">Ribosomal protein</keyword>
<keyword id="KW-0694">RNA-binding</keyword>
<keyword id="KW-0699">rRNA-binding</keyword>
<geneLocation type="chloroplast"/>
<organism>
    <name type="scientific">Porphyra purpurea</name>
    <name type="common">Red seaweed</name>
    <name type="synonym">Ulva purpurea</name>
    <dbReference type="NCBI Taxonomy" id="2787"/>
    <lineage>
        <taxon>Eukaryota</taxon>
        <taxon>Rhodophyta</taxon>
        <taxon>Bangiophyceae</taxon>
        <taxon>Bangiales</taxon>
        <taxon>Bangiaceae</taxon>
        <taxon>Porphyra</taxon>
    </lineage>
</organism>
<sequence length="100" mass="12105">MAKKNMIQREIKREKLEKKYYLKRLAIKEQLKKTTSFAEKIELRQKLQEMPRNSAPVRSRNRCWLTGRSRGYYRDFGLSRHVFREMSHECLLPGVTKSSW</sequence>
<protein>
    <recommendedName>
        <fullName evidence="1">Small ribosomal subunit protein uS14c</fullName>
    </recommendedName>
    <alternativeName>
        <fullName evidence="2">30S ribosomal protein S14, chloroplastic</fullName>
    </alternativeName>
</protein>
<dbReference type="EMBL" id="U38804">
    <property type="protein sequence ID" value="AAC08205.1"/>
    <property type="molecule type" value="Genomic_DNA"/>
</dbReference>
<dbReference type="PIR" id="S73240">
    <property type="entry name" value="S73240"/>
</dbReference>
<dbReference type="RefSeq" id="NP_053929.1">
    <property type="nucleotide sequence ID" value="NC_000925.1"/>
</dbReference>
<dbReference type="SMR" id="P51319"/>
<dbReference type="GeneID" id="809948"/>
<dbReference type="GO" id="GO:0009507">
    <property type="term" value="C:chloroplast"/>
    <property type="evidence" value="ECO:0007669"/>
    <property type="project" value="UniProtKB-SubCell"/>
</dbReference>
<dbReference type="GO" id="GO:0015935">
    <property type="term" value="C:small ribosomal subunit"/>
    <property type="evidence" value="ECO:0007669"/>
    <property type="project" value="TreeGrafter"/>
</dbReference>
<dbReference type="GO" id="GO:0019843">
    <property type="term" value="F:rRNA binding"/>
    <property type="evidence" value="ECO:0007669"/>
    <property type="project" value="UniProtKB-UniRule"/>
</dbReference>
<dbReference type="GO" id="GO:0003735">
    <property type="term" value="F:structural constituent of ribosome"/>
    <property type="evidence" value="ECO:0007669"/>
    <property type="project" value="InterPro"/>
</dbReference>
<dbReference type="GO" id="GO:0006412">
    <property type="term" value="P:translation"/>
    <property type="evidence" value="ECO:0007669"/>
    <property type="project" value="UniProtKB-UniRule"/>
</dbReference>
<dbReference type="FunFam" id="1.10.287.1480:FF:000001">
    <property type="entry name" value="30S ribosomal protein S14"/>
    <property type="match status" value="1"/>
</dbReference>
<dbReference type="Gene3D" id="1.10.287.1480">
    <property type="match status" value="1"/>
</dbReference>
<dbReference type="HAMAP" id="MF_00537">
    <property type="entry name" value="Ribosomal_uS14_1"/>
    <property type="match status" value="1"/>
</dbReference>
<dbReference type="InterPro" id="IPR001209">
    <property type="entry name" value="Ribosomal_uS14"/>
</dbReference>
<dbReference type="InterPro" id="IPR023036">
    <property type="entry name" value="Ribosomal_uS14_bac/plastid"/>
</dbReference>
<dbReference type="InterPro" id="IPR018271">
    <property type="entry name" value="Ribosomal_uS14_CS"/>
</dbReference>
<dbReference type="NCBIfam" id="NF006477">
    <property type="entry name" value="PRK08881.1"/>
    <property type="match status" value="1"/>
</dbReference>
<dbReference type="PANTHER" id="PTHR19836">
    <property type="entry name" value="30S RIBOSOMAL PROTEIN S14"/>
    <property type="match status" value="1"/>
</dbReference>
<dbReference type="PANTHER" id="PTHR19836:SF19">
    <property type="entry name" value="SMALL RIBOSOMAL SUBUNIT PROTEIN US14M"/>
    <property type="match status" value="1"/>
</dbReference>
<dbReference type="Pfam" id="PF00253">
    <property type="entry name" value="Ribosomal_S14"/>
    <property type="match status" value="1"/>
</dbReference>
<dbReference type="SUPFAM" id="SSF57716">
    <property type="entry name" value="Glucocorticoid receptor-like (DNA-binding domain)"/>
    <property type="match status" value="1"/>
</dbReference>
<dbReference type="PROSITE" id="PS00527">
    <property type="entry name" value="RIBOSOMAL_S14"/>
    <property type="match status" value="1"/>
</dbReference>
<accession>P51319</accession>
<proteinExistence type="inferred from homology"/>
<reference key="1">
    <citation type="journal article" date="1995" name="Plant Mol. Biol. Rep.">
        <title>Complete nucleotide sequence of the Porphyra purpurea chloroplast genome.</title>
        <authorList>
            <person name="Reith M.E."/>
            <person name="Munholland J."/>
        </authorList>
    </citation>
    <scope>NUCLEOTIDE SEQUENCE [LARGE SCALE GENOMIC DNA]</scope>
    <source>
        <strain>Avonport</strain>
    </source>
</reference>
<evidence type="ECO:0000255" key="1">
    <source>
        <dbReference type="HAMAP-Rule" id="MF_00537"/>
    </source>
</evidence>
<evidence type="ECO:0000305" key="2"/>
<gene>
    <name evidence="1" type="primary">rps14</name>
</gene>
<comment type="function">
    <text evidence="1">Binds 16S rRNA, required for the assembly of 30S particles.</text>
</comment>
<comment type="subunit">
    <text evidence="1">Part of the 30S ribosomal subunit.</text>
</comment>
<comment type="subcellular location">
    <subcellularLocation>
        <location>Plastid</location>
        <location>Chloroplast</location>
    </subcellularLocation>
</comment>
<comment type="similarity">
    <text evidence="1">Belongs to the universal ribosomal protein uS14 family.</text>
</comment>
<name>RR14_PORPU</name>